<evidence type="ECO:0000255" key="1">
    <source>
        <dbReference type="HAMAP-Rule" id="MF_01685"/>
    </source>
</evidence>
<evidence type="ECO:0007829" key="2">
    <source>
        <dbReference type="PDB" id="6A4J"/>
    </source>
</evidence>
<name>FENR_STAA8</name>
<reference key="1">
    <citation type="book" date="2006" name="Gram positive pathogens, 2nd edition">
        <title>The Staphylococcus aureus NCTC 8325 genome.</title>
        <editorList>
            <person name="Fischetti V."/>
            <person name="Novick R."/>
            <person name="Ferretti J."/>
            <person name="Portnoy D."/>
            <person name="Rood J."/>
        </editorList>
        <authorList>
            <person name="Gillaspy A.F."/>
            <person name="Worrell V."/>
            <person name="Orvis J."/>
            <person name="Roe B.A."/>
            <person name="Dyer D.W."/>
            <person name="Iandolo J.J."/>
        </authorList>
    </citation>
    <scope>NUCLEOTIDE SEQUENCE [LARGE SCALE GENOMIC DNA]</scope>
    <source>
        <strain>NCTC 8325 / PS 47</strain>
    </source>
</reference>
<protein>
    <recommendedName>
        <fullName evidence="1">Ferredoxin--NADP reductase</fullName>
        <shortName evidence="1">FNR</shortName>
        <shortName evidence="1">Fd-NADP(+) reductase</shortName>
        <ecNumber evidence="1">1.18.1.2</ecNumber>
    </recommendedName>
</protein>
<gene>
    <name type="ordered locus">SAOUHSC_02654</name>
</gene>
<dbReference type="EC" id="1.18.1.2" evidence="1"/>
<dbReference type="EMBL" id="CP000253">
    <property type="protein sequence ID" value="ABD31662.1"/>
    <property type="molecule type" value="Genomic_DNA"/>
</dbReference>
<dbReference type="RefSeq" id="WP_000655971.1">
    <property type="nucleotide sequence ID" value="NZ_LS483365.1"/>
</dbReference>
<dbReference type="RefSeq" id="YP_501116.1">
    <property type="nucleotide sequence ID" value="NC_007795.1"/>
</dbReference>
<dbReference type="PDB" id="6A4J">
    <property type="method" value="X-ray"/>
    <property type="resolution" value="3.40 A"/>
    <property type="chains" value="A/B=1-344"/>
</dbReference>
<dbReference type="PDBsum" id="6A4J"/>
<dbReference type="SMR" id="Q2FVP8"/>
<dbReference type="STRING" id="93061.SAOUHSC_02654"/>
<dbReference type="PaxDb" id="1280-SAXN108_2626"/>
<dbReference type="GeneID" id="3921216"/>
<dbReference type="KEGG" id="sao:SAOUHSC_02654"/>
<dbReference type="PATRIC" id="fig|93061.5.peg.2401"/>
<dbReference type="eggNOG" id="COG0492">
    <property type="taxonomic scope" value="Bacteria"/>
</dbReference>
<dbReference type="HOGENOM" id="CLU_031864_5_5_9"/>
<dbReference type="OrthoDB" id="9806179at2"/>
<dbReference type="PRO" id="PR:Q2FVP8"/>
<dbReference type="Proteomes" id="UP000008816">
    <property type="component" value="Chromosome"/>
</dbReference>
<dbReference type="GO" id="GO:0004324">
    <property type="term" value="F:ferredoxin-NADP+ reductase activity"/>
    <property type="evidence" value="ECO:0007669"/>
    <property type="project" value="UniProtKB-UniRule"/>
</dbReference>
<dbReference type="GO" id="GO:0050660">
    <property type="term" value="F:flavin adenine dinucleotide binding"/>
    <property type="evidence" value="ECO:0007669"/>
    <property type="project" value="UniProtKB-UniRule"/>
</dbReference>
<dbReference type="GO" id="GO:0050661">
    <property type="term" value="F:NADP binding"/>
    <property type="evidence" value="ECO:0007669"/>
    <property type="project" value="UniProtKB-UniRule"/>
</dbReference>
<dbReference type="GO" id="GO:0004791">
    <property type="term" value="F:thioredoxin-disulfide reductase (NADPH) activity"/>
    <property type="evidence" value="ECO:0000318"/>
    <property type="project" value="GO_Central"/>
</dbReference>
<dbReference type="GO" id="GO:0045454">
    <property type="term" value="P:cell redox homeostasis"/>
    <property type="evidence" value="ECO:0000318"/>
    <property type="project" value="GO_Central"/>
</dbReference>
<dbReference type="Gene3D" id="3.50.50.60">
    <property type="entry name" value="FAD/NAD(P)-binding domain"/>
    <property type="match status" value="2"/>
</dbReference>
<dbReference type="HAMAP" id="MF_01685">
    <property type="entry name" value="FENR2"/>
    <property type="match status" value="1"/>
</dbReference>
<dbReference type="InterPro" id="IPR036188">
    <property type="entry name" value="FAD/NAD-bd_sf"/>
</dbReference>
<dbReference type="InterPro" id="IPR023753">
    <property type="entry name" value="FAD/NAD-binding_dom"/>
</dbReference>
<dbReference type="InterPro" id="IPR022890">
    <property type="entry name" value="Fd--NADP_Rdtase_type_2"/>
</dbReference>
<dbReference type="InterPro" id="IPR050097">
    <property type="entry name" value="Ferredoxin-NADP_redctase_2"/>
</dbReference>
<dbReference type="PANTHER" id="PTHR48105">
    <property type="entry name" value="THIOREDOXIN REDUCTASE 1-RELATED-RELATED"/>
    <property type="match status" value="1"/>
</dbReference>
<dbReference type="Pfam" id="PF07992">
    <property type="entry name" value="Pyr_redox_2"/>
    <property type="match status" value="1"/>
</dbReference>
<dbReference type="PRINTS" id="PR00368">
    <property type="entry name" value="FADPNR"/>
</dbReference>
<dbReference type="PRINTS" id="PR00469">
    <property type="entry name" value="PNDRDTASEII"/>
</dbReference>
<dbReference type="SUPFAM" id="SSF51905">
    <property type="entry name" value="FAD/NAD(P)-binding domain"/>
    <property type="match status" value="1"/>
</dbReference>
<proteinExistence type="evidence at protein level"/>
<feature type="chain" id="PRO_0000364944" description="Ferredoxin--NADP reductase">
    <location>
        <begin position="1"/>
        <end position="344"/>
    </location>
</feature>
<feature type="binding site" evidence="1">
    <location>
        <position position="12"/>
    </location>
    <ligand>
        <name>FAD</name>
        <dbReference type="ChEBI" id="CHEBI:57692"/>
    </ligand>
</feature>
<feature type="binding site" evidence="1">
    <location>
        <position position="31"/>
    </location>
    <ligand>
        <name>FAD</name>
        <dbReference type="ChEBI" id="CHEBI:57692"/>
    </ligand>
</feature>
<feature type="binding site" evidence="1">
    <location>
        <position position="39"/>
    </location>
    <ligand>
        <name>FAD</name>
        <dbReference type="ChEBI" id="CHEBI:57692"/>
    </ligand>
</feature>
<feature type="binding site" evidence="1">
    <location>
        <position position="43"/>
    </location>
    <ligand>
        <name>FAD</name>
        <dbReference type="ChEBI" id="CHEBI:57692"/>
    </ligand>
</feature>
<feature type="binding site" evidence="1">
    <location>
        <position position="83"/>
    </location>
    <ligand>
        <name>FAD</name>
        <dbReference type="ChEBI" id="CHEBI:57692"/>
    </ligand>
</feature>
<feature type="binding site" evidence="1">
    <location>
        <position position="118"/>
    </location>
    <ligand>
        <name>FAD</name>
        <dbReference type="ChEBI" id="CHEBI:57692"/>
    </ligand>
</feature>
<feature type="binding site" evidence="1">
    <location>
        <position position="285"/>
    </location>
    <ligand>
        <name>FAD</name>
        <dbReference type="ChEBI" id="CHEBI:57692"/>
    </ligand>
</feature>
<feature type="binding site" evidence="1">
    <location>
        <position position="326"/>
    </location>
    <ligand>
        <name>FAD</name>
        <dbReference type="ChEBI" id="CHEBI:57692"/>
    </ligand>
</feature>
<feature type="strand" evidence="2">
    <location>
        <begin position="2"/>
        <end position="7"/>
    </location>
</feature>
<feature type="helix" evidence="2">
    <location>
        <begin position="11"/>
        <end position="22"/>
    </location>
</feature>
<feature type="strand" evidence="2">
    <location>
        <begin position="27"/>
        <end position="30"/>
    </location>
</feature>
<feature type="strand" evidence="2">
    <location>
        <begin position="32"/>
        <end position="36"/>
    </location>
</feature>
<feature type="helix" evidence="2">
    <location>
        <begin position="38"/>
        <end position="41"/>
    </location>
</feature>
<feature type="strand" evidence="2">
    <location>
        <begin position="46"/>
        <end position="48"/>
    </location>
</feature>
<feature type="strand" evidence="2">
    <location>
        <begin position="56"/>
        <end position="58"/>
    </location>
</feature>
<feature type="helix" evidence="2">
    <location>
        <begin position="59"/>
        <end position="70"/>
    </location>
</feature>
<feature type="turn" evidence="2">
    <location>
        <begin position="71"/>
        <end position="73"/>
    </location>
</feature>
<feature type="strand" evidence="2">
    <location>
        <begin position="76"/>
        <end position="78"/>
    </location>
</feature>
<feature type="strand" evidence="2">
    <location>
        <begin position="83"/>
        <end position="90"/>
    </location>
</feature>
<feature type="strand" evidence="2">
    <location>
        <begin position="93"/>
        <end position="98"/>
    </location>
</feature>
<feature type="strand" evidence="2">
    <location>
        <begin position="103"/>
        <end position="111"/>
    </location>
</feature>
<feature type="strand" evidence="2">
    <location>
        <begin position="125"/>
        <end position="128"/>
    </location>
</feature>
<feature type="helix" evidence="2">
    <location>
        <begin position="130"/>
        <end position="132"/>
    </location>
</feature>
<feature type="strand" evidence="2">
    <location>
        <begin position="135"/>
        <end position="138"/>
    </location>
</feature>
<feature type="helix" evidence="2">
    <location>
        <begin position="144"/>
        <end position="146"/>
    </location>
</feature>
<feature type="strand" evidence="2">
    <location>
        <begin position="150"/>
        <end position="154"/>
    </location>
</feature>
<feature type="helix" evidence="2">
    <location>
        <begin position="158"/>
        <end position="168"/>
    </location>
</feature>
<feature type="strand" evidence="2">
    <location>
        <begin position="171"/>
        <end position="177"/>
    </location>
</feature>
<feature type="strand" evidence="2">
    <location>
        <begin position="179"/>
        <end position="182"/>
    </location>
</feature>
<feature type="helix" evidence="2">
    <location>
        <begin position="186"/>
        <end position="193"/>
    </location>
</feature>
<feature type="strand" evidence="2">
    <location>
        <begin position="198"/>
        <end position="201"/>
    </location>
</feature>
<feature type="strand" evidence="2">
    <location>
        <begin position="204"/>
        <end position="210"/>
    </location>
</feature>
<feature type="strand" evidence="2">
    <location>
        <begin position="220"/>
        <end position="225"/>
    </location>
</feature>
<feature type="turn" evidence="2">
    <location>
        <begin position="226"/>
        <end position="228"/>
    </location>
</feature>
<feature type="strand" evidence="2">
    <location>
        <begin position="231"/>
        <end position="235"/>
    </location>
</feature>
<feature type="strand" evidence="2">
    <location>
        <begin position="237"/>
        <end position="241"/>
    </location>
</feature>
<feature type="helix" evidence="2">
    <location>
        <begin position="247"/>
        <end position="249"/>
    </location>
</feature>
<feature type="helix" evidence="2">
    <location>
        <begin position="251"/>
        <end position="253"/>
    </location>
</feature>
<feature type="strand" evidence="2">
    <location>
        <begin position="254"/>
        <end position="257"/>
    </location>
</feature>
<feature type="strand" evidence="2">
    <location>
        <begin position="270"/>
        <end position="274"/>
    </location>
</feature>
<feature type="strand" evidence="2">
    <location>
        <begin position="280"/>
        <end position="282"/>
    </location>
</feature>
<feature type="helix" evidence="2">
    <location>
        <begin position="296"/>
        <end position="314"/>
    </location>
</feature>
<feature type="helix" evidence="2">
    <location>
        <begin position="325"/>
        <end position="327"/>
    </location>
</feature>
<feature type="helix" evidence="2">
    <location>
        <begin position="329"/>
        <end position="331"/>
    </location>
</feature>
<feature type="helix" evidence="2">
    <location>
        <begin position="332"/>
        <end position="340"/>
    </location>
</feature>
<sequence length="344" mass="38230">MKDVTIIGGGPSGLYASFYAGLRDMSVRLIDVQSELGGKMRIYPEKIIWDIGGIAPKPCHEILKDTIKQGLYFKPEVHLNERVVDIRKKAERHFEVETEAGEIYTSKAVIIAIGAGIINPKQLDVKGVERYQLTNLHYVVQSYRRFKDKDVLISGGGNTALDWAHDIAKIAKSVTVVYRKEDVSGHEAMKTLVTDLNVKLCPKTRIKYLVGNDDETHISEVVLEHVESGDRHTVKFDDVIISHGFDRCNTLLSETSSKLDMHDDCRVKGFGNTTTSIPGIYACGDIVYHDAKSHLIASAFSDGANAANLAKTYIQPDANAEGYVSSHHEVFKEANKTIVNKHLY</sequence>
<comment type="catalytic activity">
    <reaction evidence="1">
        <text>2 reduced [2Fe-2S]-[ferredoxin] + NADP(+) + H(+) = 2 oxidized [2Fe-2S]-[ferredoxin] + NADPH</text>
        <dbReference type="Rhea" id="RHEA:20125"/>
        <dbReference type="Rhea" id="RHEA-COMP:10000"/>
        <dbReference type="Rhea" id="RHEA-COMP:10001"/>
        <dbReference type="ChEBI" id="CHEBI:15378"/>
        <dbReference type="ChEBI" id="CHEBI:33737"/>
        <dbReference type="ChEBI" id="CHEBI:33738"/>
        <dbReference type="ChEBI" id="CHEBI:57783"/>
        <dbReference type="ChEBI" id="CHEBI:58349"/>
        <dbReference type="EC" id="1.18.1.2"/>
    </reaction>
</comment>
<comment type="cofactor">
    <cofactor evidence="1">
        <name>FAD</name>
        <dbReference type="ChEBI" id="CHEBI:57692"/>
    </cofactor>
    <text evidence="1">Binds 1 FAD per subunit.</text>
</comment>
<comment type="subunit">
    <text evidence="1">Homodimer.</text>
</comment>
<comment type="similarity">
    <text evidence="1">Belongs to the ferredoxin--NADP reductase type 2 family.</text>
</comment>
<keyword id="KW-0002">3D-structure</keyword>
<keyword id="KW-0274">FAD</keyword>
<keyword id="KW-0285">Flavoprotein</keyword>
<keyword id="KW-0521">NADP</keyword>
<keyword id="KW-0560">Oxidoreductase</keyword>
<keyword id="KW-1185">Reference proteome</keyword>
<organism>
    <name type="scientific">Staphylococcus aureus (strain NCTC 8325 / PS 47)</name>
    <dbReference type="NCBI Taxonomy" id="93061"/>
    <lineage>
        <taxon>Bacteria</taxon>
        <taxon>Bacillati</taxon>
        <taxon>Bacillota</taxon>
        <taxon>Bacilli</taxon>
        <taxon>Bacillales</taxon>
        <taxon>Staphylococcaceae</taxon>
        <taxon>Staphylococcus</taxon>
    </lineage>
</organism>
<accession>Q2FVP8</accession>